<evidence type="ECO:0000255" key="1">
    <source>
        <dbReference type="HAMAP-Rule" id="MF_00624"/>
    </source>
</evidence>
<sequence length="380" mass="41860">MSTEMLGMILAGGQGTRLGKLTKTTAKPSVPFGGRYRIIDFTLSNLANSGVNTAGVITQYQPLELNRHIQNGASWGLNERGAGVTILQPYASSEGEKFFEGTAHAIYQNIAYIDSYNPQYLLILSGDHIYKMDYQAMLDYHKAKKASLTVAVMPVEKEEAKRFGIMNTDDTDRIIEFEEKPAKPKSNLASMGIYIFNWPTLKQYLTESYATDGAMEDFGHDVIPAYLTHNEASYAYAFRGYWKDVGTIQSLWEANMEFLNPNNPLNIGNRNWRIFSQNEALPPMFLTKTAKVAGSMIVDGCYVAGSIQHSILSQNVKIGEGSVIKDSMIMPNAVIGKNVTVDHAIVGENAIIGDNGKVVGKPNEISVVGYGEVLGRTEKE</sequence>
<reference key="1">
    <citation type="journal article" date="2006" name="Proc. Natl. Acad. Sci. U.S.A.">
        <title>Comparative genomics of the lactic acid bacteria.</title>
        <authorList>
            <person name="Makarova K.S."/>
            <person name="Slesarev A."/>
            <person name="Wolf Y.I."/>
            <person name="Sorokin A."/>
            <person name="Mirkin B."/>
            <person name="Koonin E.V."/>
            <person name="Pavlov A."/>
            <person name="Pavlova N."/>
            <person name="Karamychev V."/>
            <person name="Polouchine N."/>
            <person name="Shakhova V."/>
            <person name="Grigoriev I."/>
            <person name="Lou Y."/>
            <person name="Rohksar D."/>
            <person name="Lucas S."/>
            <person name="Huang K."/>
            <person name="Goodstein D.M."/>
            <person name="Hawkins T."/>
            <person name="Plengvidhya V."/>
            <person name="Welker D."/>
            <person name="Hughes J."/>
            <person name="Goh Y."/>
            <person name="Benson A."/>
            <person name="Baldwin K."/>
            <person name="Lee J.-H."/>
            <person name="Diaz-Muniz I."/>
            <person name="Dosti B."/>
            <person name="Smeianov V."/>
            <person name="Wechter W."/>
            <person name="Barabote R."/>
            <person name="Lorca G."/>
            <person name="Altermann E."/>
            <person name="Barrangou R."/>
            <person name="Ganesan B."/>
            <person name="Xie Y."/>
            <person name="Rawsthorne H."/>
            <person name="Tamir D."/>
            <person name="Parker C."/>
            <person name="Breidt F."/>
            <person name="Broadbent J.R."/>
            <person name="Hutkins R."/>
            <person name="O'Sullivan D."/>
            <person name="Steele J."/>
            <person name="Unlu G."/>
            <person name="Saier M.H. Jr."/>
            <person name="Klaenhammer T."/>
            <person name="Richardson P."/>
            <person name="Kozyavkin S."/>
            <person name="Weimer B.C."/>
            <person name="Mills D.A."/>
        </authorList>
    </citation>
    <scope>NUCLEOTIDE SEQUENCE [LARGE SCALE GENOMIC DNA]</scope>
    <source>
        <strain>ATCC 334 / BCRC 17002 / CCUG 31169 / CIP 107868 / KCTC 3260 / NRRL B-441</strain>
    </source>
</reference>
<gene>
    <name evidence="1" type="primary">glgC</name>
    <name type="ordered locus">LSEI_2039</name>
</gene>
<organism>
    <name type="scientific">Lacticaseibacillus paracasei (strain ATCC 334 / BCRC 17002 / CCUG 31169 / CIP 107868 / KCTC 3260 / NRRL B-441)</name>
    <name type="common">Lactobacillus paracasei</name>
    <dbReference type="NCBI Taxonomy" id="321967"/>
    <lineage>
        <taxon>Bacteria</taxon>
        <taxon>Bacillati</taxon>
        <taxon>Bacillota</taxon>
        <taxon>Bacilli</taxon>
        <taxon>Lactobacillales</taxon>
        <taxon>Lactobacillaceae</taxon>
        <taxon>Lacticaseibacillus</taxon>
    </lineage>
</organism>
<dbReference type="EC" id="2.7.7.27" evidence="1"/>
<dbReference type="EMBL" id="CP000423">
    <property type="protein sequence ID" value="ABJ70794.1"/>
    <property type="molecule type" value="Genomic_DNA"/>
</dbReference>
<dbReference type="RefSeq" id="WP_003659327.1">
    <property type="nucleotide sequence ID" value="NC_008526.1"/>
</dbReference>
<dbReference type="RefSeq" id="YP_807236.1">
    <property type="nucleotide sequence ID" value="NC_008526.1"/>
</dbReference>
<dbReference type="SMR" id="Q036S8"/>
<dbReference type="STRING" id="321967.LSEI_2039"/>
<dbReference type="PaxDb" id="321967-LSEI_2039"/>
<dbReference type="KEGG" id="lca:LSEI_2039"/>
<dbReference type="PATRIC" id="fig|321967.11.peg.2003"/>
<dbReference type="HOGENOM" id="CLU_029499_14_0_9"/>
<dbReference type="UniPathway" id="UPA00164"/>
<dbReference type="Proteomes" id="UP000001651">
    <property type="component" value="Chromosome"/>
</dbReference>
<dbReference type="GO" id="GO:0005524">
    <property type="term" value="F:ATP binding"/>
    <property type="evidence" value="ECO:0007669"/>
    <property type="project" value="UniProtKB-KW"/>
</dbReference>
<dbReference type="GO" id="GO:0008878">
    <property type="term" value="F:glucose-1-phosphate adenylyltransferase activity"/>
    <property type="evidence" value="ECO:0007669"/>
    <property type="project" value="UniProtKB-UniRule"/>
</dbReference>
<dbReference type="GO" id="GO:0005978">
    <property type="term" value="P:glycogen biosynthetic process"/>
    <property type="evidence" value="ECO:0007669"/>
    <property type="project" value="UniProtKB-UniRule"/>
</dbReference>
<dbReference type="CDD" id="cd02508">
    <property type="entry name" value="ADP_Glucose_PP"/>
    <property type="match status" value="1"/>
</dbReference>
<dbReference type="CDD" id="cd04651">
    <property type="entry name" value="LbH_G1P_AT_C"/>
    <property type="match status" value="1"/>
</dbReference>
<dbReference type="Gene3D" id="2.160.10.10">
    <property type="entry name" value="Hexapeptide repeat proteins"/>
    <property type="match status" value="1"/>
</dbReference>
<dbReference type="Gene3D" id="3.90.550.10">
    <property type="entry name" value="Spore Coat Polysaccharide Biosynthesis Protein SpsA, Chain A"/>
    <property type="match status" value="1"/>
</dbReference>
<dbReference type="HAMAP" id="MF_00624">
    <property type="entry name" value="GlgC"/>
    <property type="match status" value="1"/>
</dbReference>
<dbReference type="InterPro" id="IPR011831">
    <property type="entry name" value="ADP-Glc_PPase"/>
</dbReference>
<dbReference type="InterPro" id="IPR005836">
    <property type="entry name" value="ADP_Glu_pyroP_CS"/>
</dbReference>
<dbReference type="InterPro" id="IPR023049">
    <property type="entry name" value="GlgC_bac"/>
</dbReference>
<dbReference type="InterPro" id="IPR056818">
    <property type="entry name" value="GlmU/GlgC-like_hexapep"/>
</dbReference>
<dbReference type="InterPro" id="IPR005835">
    <property type="entry name" value="NTP_transferase_dom"/>
</dbReference>
<dbReference type="InterPro" id="IPR029044">
    <property type="entry name" value="Nucleotide-diphossugar_trans"/>
</dbReference>
<dbReference type="InterPro" id="IPR011004">
    <property type="entry name" value="Trimer_LpxA-like_sf"/>
</dbReference>
<dbReference type="NCBIfam" id="TIGR02091">
    <property type="entry name" value="glgC"/>
    <property type="match status" value="1"/>
</dbReference>
<dbReference type="NCBIfam" id="NF003670">
    <property type="entry name" value="PRK05293.1"/>
    <property type="match status" value="1"/>
</dbReference>
<dbReference type="PANTHER" id="PTHR43523:SF2">
    <property type="entry name" value="GLUCOSE-1-PHOSPHATE ADENYLYLTRANSFERASE"/>
    <property type="match status" value="1"/>
</dbReference>
<dbReference type="PANTHER" id="PTHR43523">
    <property type="entry name" value="GLUCOSE-1-PHOSPHATE ADENYLYLTRANSFERASE-RELATED"/>
    <property type="match status" value="1"/>
</dbReference>
<dbReference type="Pfam" id="PF24894">
    <property type="entry name" value="Hexapep_GlmU"/>
    <property type="match status" value="1"/>
</dbReference>
<dbReference type="Pfam" id="PF00483">
    <property type="entry name" value="NTP_transferase"/>
    <property type="match status" value="1"/>
</dbReference>
<dbReference type="SUPFAM" id="SSF53448">
    <property type="entry name" value="Nucleotide-diphospho-sugar transferases"/>
    <property type="match status" value="1"/>
</dbReference>
<dbReference type="SUPFAM" id="SSF51161">
    <property type="entry name" value="Trimeric LpxA-like enzymes"/>
    <property type="match status" value="1"/>
</dbReference>
<dbReference type="PROSITE" id="PS00808">
    <property type="entry name" value="ADP_GLC_PYROPHOSPH_1"/>
    <property type="match status" value="1"/>
</dbReference>
<dbReference type="PROSITE" id="PS00810">
    <property type="entry name" value="ADP_GLC_PYROPHOSPH_3"/>
    <property type="match status" value="1"/>
</dbReference>
<comment type="function">
    <text evidence="1">Involved in the biosynthesis of ADP-glucose, a building block required for the elongation reactions to produce glycogen. Catalyzes the reaction between ATP and alpha-D-glucose 1-phosphate (G1P) to produce pyrophosphate and ADP-Glc.</text>
</comment>
<comment type="catalytic activity">
    <reaction evidence="1">
        <text>alpha-D-glucose 1-phosphate + ATP + H(+) = ADP-alpha-D-glucose + diphosphate</text>
        <dbReference type="Rhea" id="RHEA:12120"/>
        <dbReference type="ChEBI" id="CHEBI:15378"/>
        <dbReference type="ChEBI" id="CHEBI:30616"/>
        <dbReference type="ChEBI" id="CHEBI:33019"/>
        <dbReference type="ChEBI" id="CHEBI:57498"/>
        <dbReference type="ChEBI" id="CHEBI:58601"/>
        <dbReference type="EC" id="2.7.7.27"/>
    </reaction>
</comment>
<comment type="pathway">
    <text evidence="1">Glycan biosynthesis; glycogen biosynthesis.</text>
</comment>
<comment type="subunit">
    <text evidence="1">Homotetramer.</text>
</comment>
<comment type="similarity">
    <text evidence="1">Belongs to the bacterial/plant glucose-1-phosphate adenylyltransferase family.</text>
</comment>
<accession>Q036S8</accession>
<feature type="chain" id="PRO_1000051571" description="Glucose-1-phosphate adenylyltransferase">
    <location>
        <begin position="1"/>
        <end position="380"/>
    </location>
</feature>
<feature type="binding site" evidence="1">
    <location>
        <position position="164"/>
    </location>
    <ligand>
        <name>alpha-D-glucose 1-phosphate</name>
        <dbReference type="ChEBI" id="CHEBI:58601"/>
    </ligand>
</feature>
<feature type="binding site" evidence="1">
    <location>
        <begin position="179"/>
        <end position="180"/>
    </location>
    <ligand>
        <name>alpha-D-glucose 1-phosphate</name>
        <dbReference type="ChEBI" id="CHEBI:58601"/>
    </ligand>
</feature>
<feature type="binding site" evidence="1">
    <location>
        <position position="190"/>
    </location>
    <ligand>
        <name>alpha-D-glucose 1-phosphate</name>
        <dbReference type="ChEBI" id="CHEBI:58601"/>
    </ligand>
</feature>
<keyword id="KW-0067">ATP-binding</keyword>
<keyword id="KW-0119">Carbohydrate metabolism</keyword>
<keyword id="KW-0320">Glycogen biosynthesis</keyword>
<keyword id="KW-0321">Glycogen metabolism</keyword>
<keyword id="KW-0547">Nucleotide-binding</keyword>
<keyword id="KW-0548">Nucleotidyltransferase</keyword>
<keyword id="KW-1185">Reference proteome</keyword>
<keyword id="KW-0808">Transferase</keyword>
<protein>
    <recommendedName>
        <fullName evidence="1">Glucose-1-phosphate adenylyltransferase</fullName>
        <ecNumber evidence="1">2.7.7.27</ecNumber>
    </recommendedName>
    <alternativeName>
        <fullName evidence="1">ADP-glucose pyrophosphorylase</fullName>
        <shortName evidence="1">ADPGlc PPase</shortName>
    </alternativeName>
    <alternativeName>
        <fullName evidence="1">ADP-glucose synthase</fullName>
    </alternativeName>
</protein>
<name>GLGC_LACP3</name>
<proteinExistence type="inferred from homology"/>